<protein>
    <recommendedName>
        <fullName evidence="2">Translation initiation factor IF-2</fullName>
    </recommendedName>
</protein>
<keyword id="KW-0963">Cytoplasm</keyword>
<keyword id="KW-0342">GTP-binding</keyword>
<keyword id="KW-0396">Initiation factor</keyword>
<keyword id="KW-0547">Nucleotide-binding</keyword>
<keyword id="KW-0648">Protein biosynthesis</keyword>
<keyword id="KW-1185">Reference proteome</keyword>
<accession>B9DVB7</accession>
<sequence>MSKKRLHEIAKEIGKTSKEVVEKAKSLGLDVKSHASSVSEEDAKKIVSTFTEKPKTETKPKIKAVDETPKPKLEAVKEEVKVEKTQTVQETVNPTVARPKSRNFKAEREARAKEQAARQKRNAQESTERRQDNRYQQKNDQGSKNRNFNKSQGQAKDRRFDAKGSQQNNRQDSRIASNKPNHNDKFNAANRNQNNSQQERQVGAARIDFKARAAALKAEQNAEYMRHKETQLREQEEARRLAERAKEEARLAAQKAAEEKAKEAEKAAKTERFEPKSAVASTVAPEAVKPVDKRRKKARPEKSYEDQSSNENGPKQNKKSWNNQNQVRNQRNSNWNKKPKKGKNAKNNTVAPKPVTERKFHELPKEFEYTEGMTVVEIAKRIKREPAEIVKKLFMMGVMATQNQSLDGDTIELLMVDYGIEAKEKVQVDDADIERFFEDDTYLNPDKLVERAPVVTIMGHVDHGKTTLLDTLRNSRVATGEAGGITQHIGAYQIEEAGKKITFLDTPGHAAFTSMRARGASVTDITILIVAADDGVMPQTIEAINHSKAAEVPIIVAINKIDKPGANPERVISELAEHGIISTAWGGDSEFVEISAKFNKNIDELLETVLLVAEVEELKADPTVRAIGTVIEARLDKGKGAVATLLVQQGTLHVQDPIVIGNTFGRVRAMTNDLGRRVKVAPPSTPVSITGLNETPMAGDHFAVYEDEKAARAAGEERAKRALLKQRQNTQRVSLDNLFDTLKAGEIKTVNVIIKADVQGSVEALAASLLKIEVEGVRVNVVHSAVGAINESDVTLAEASNAVIIGFNVRPTPQARQQAETDDVEIRLHSIIYKVIEEVEEAMKGKLDPEYKEKILGEAVIRETFKVSKVGTIGGFMVLSGKITRDSNVRVIRDSVVIFDGKLASLKHYKDDVKEVGNAQEGGLMIEKFNDLQVDDNIEAYIMEEIVRK</sequence>
<feature type="chain" id="PRO_1000190640" description="Translation initiation factor IF-2">
    <location>
        <begin position="1"/>
        <end position="949"/>
    </location>
</feature>
<feature type="domain" description="tr-type G">
    <location>
        <begin position="450"/>
        <end position="619"/>
    </location>
</feature>
<feature type="region of interest" description="Disordered" evidence="3">
    <location>
        <begin position="50"/>
        <end position="206"/>
    </location>
</feature>
<feature type="region of interest" description="Disordered" evidence="3">
    <location>
        <begin position="220"/>
        <end position="359"/>
    </location>
</feature>
<feature type="region of interest" description="G1" evidence="1">
    <location>
        <begin position="459"/>
        <end position="466"/>
    </location>
</feature>
<feature type="region of interest" description="G2" evidence="1">
    <location>
        <begin position="484"/>
        <end position="488"/>
    </location>
</feature>
<feature type="region of interest" description="G3" evidence="1">
    <location>
        <begin position="505"/>
        <end position="508"/>
    </location>
</feature>
<feature type="region of interest" description="G4" evidence="1">
    <location>
        <begin position="559"/>
        <end position="562"/>
    </location>
</feature>
<feature type="region of interest" description="G5" evidence="1">
    <location>
        <begin position="595"/>
        <end position="597"/>
    </location>
</feature>
<feature type="compositionally biased region" description="Basic and acidic residues" evidence="3">
    <location>
        <begin position="52"/>
        <end position="84"/>
    </location>
</feature>
<feature type="compositionally biased region" description="Basic and acidic residues" evidence="3">
    <location>
        <begin position="104"/>
        <end position="143"/>
    </location>
</feature>
<feature type="compositionally biased region" description="Polar residues" evidence="3">
    <location>
        <begin position="144"/>
        <end position="154"/>
    </location>
</feature>
<feature type="compositionally biased region" description="Polar residues" evidence="3">
    <location>
        <begin position="164"/>
        <end position="180"/>
    </location>
</feature>
<feature type="compositionally biased region" description="Low complexity" evidence="3">
    <location>
        <begin position="187"/>
        <end position="206"/>
    </location>
</feature>
<feature type="compositionally biased region" description="Basic and acidic residues" evidence="3">
    <location>
        <begin position="224"/>
        <end position="275"/>
    </location>
</feature>
<feature type="compositionally biased region" description="Low complexity" evidence="3">
    <location>
        <begin position="319"/>
        <end position="336"/>
    </location>
</feature>
<feature type="binding site" evidence="2">
    <location>
        <begin position="459"/>
        <end position="466"/>
    </location>
    <ligand>
        <name>GTP</name>
        <dbReference type="ChEBI" id="CHEBI:37565"/>
    </ligand>
</feature>
<feature type="binding site" evidence="2">
    <location>
        <begin position="505"/>
        <end position="509"/>
    </location>
    <ligand>
        <name>GTP</name>
        <dbReference type="ChEBI" id="CHEBI:37565"/>
    </ligand>
</feature>
<feature type="binding site" evidence="2">
    <location>
        <begin position="559"/>
        <end position="562"/>
    </location>
    <ligand>
        <name>GTP</name>
        <dbReference type="ChEBI" id="CHEBI:37565"/>
    </ligand>
</feature>
<evidence type="ECO:0000250" key="1"/>
<evidence type="ECO:0000255" key="2">
    <source>
        <dbReference type="HAMAP-Rule" id="MF_00100"/>
    </source>
</evidence>
<evidence type="ECO:0000256" key="3">
    <source>
        <dbReference type="SAM" id="MobiDB-lite"/>
    </source>
</evidence>
<organism>
    <name type="scientific">Streptococcus uberis (strain ATCC BAA-854 / 0140J)</name>
    <dbReference type="NCBI Taxonomy" id="218495"/>
    <lineage>
        <taxon>Bacteria</taxon>
        <taxon>Bacillati</taxon>
        <taxon>Bacillota</taxon>
        <taxon>Bacilli</taxon>
        <taxon>Lactobacillales</taxon>
        <taxon>Streptococcaceae</taxon>
        <taxon>Streptococcus</taxon>
    </lineage>
</organism>
<reference key="1">
    <citation type="journal article" date="2009" name="BMC Genomics">
        <title>Evidence for niche adaptation in the genome of the bovine pathogen Streptococcus uberis.</title>
        <authorList>
            <person name="Ward P.N."/>
            <person name="Holden M.T.G."/>
            <person name="Leigh J.A."/>
            <person name="Lennard N."/>
            <person name="Bignell A."/>
            <person name="Barron A."/>
            <person name="Clark L."/>
            <person name="Quail M.A."/>
            <person name="Woodward J."/>
            <person name="Barrell B.G."/>
            <person name="Egan S.A."/>
            <person name="Field T.R."/>
            <person name="Maskell D."/>
            <person name="Kehoe M."/>
            <person name="Dowson C.G."/>
            <person name="Chanter N."/>
            <person name="Whatmore A.M."/>
            <person name="Bentley S.D."/>
            <person name="Parkhill J."/>
        </authorList>
    </citation>
    <scope>NUCLEOTIDE SEQUENCE [LARGE SCALE GENOMIC DNA]</scope>
    <source>
        <strain>ATCC BAA-854 / 0140J</strain>
    </source>
</reference>
<name>IF2_STRU0</name>
<gene>
    <name evidence="2" type="primary">infB</name>
    <name type="ordered locus">SUB1466</name>
</gene>
<dbReference type="EMBL" id="AM946015">
    <property type="protein sequence ID" value="CAR43153.1"/>
    <property type="molecule type" value="Genomic_DNA"/>
</dbReference>
<dbReference type="RefSeq" id="WP_015911778.1">
    <property type="nucleotide sequence ID" value="NC_012004.1"/>
</dbReference>
<dbReference type="SMR" id="B9DVB7"/>
<dbReference type="STRING" id="218495.SUB1466"/>
<dbReference type="KEGG" id="sub:SUB1466"/>
<dbReference type="eggNOG" id="COG0532">
    <property type="taxonomic scope" value="Bacteria"/>
</dbReference>
<dbReference type="HOGENOM" id="CLU_006301_5_0_9"/>
<dbReference type="OrthoDB" id="9811804at2"/>
<dbReference type="Proteomes" id="UP000000449">
    <property type="component" value="Chromosome"/>
</dbReference>
<dbReference type="GO" id="GO:0005829">
    <property type="term" value="C:cytosol"/>
    <property type="evidence" value="ECO:0007669"/>
    <property type="project" value="TreeGrafter"/>
</dbReference>
<dbReference type="GO" id="GO:0005525">
    <property type="term" value="F:GTP binding"/>
    <property type="evidence" value="ECO:0007669"/>
    <property type="project" value="UniProtKB-KW"/>
</dbReference>
<dbReference type="GO" id="GO:0003924">
    <property type="term" value="F:GTPase activity"/>
    <property type="evidence" value="ECO:0007669"/>
    <property type="project" value="UniProtKB-UniRule"/>
</dbReference>
<dbReference type="GO" id="GO:0003743">
    <property type="term" value="F:translation initiation factor activity"/>
    <property type="evidence" value="ECO:0007669"/>
    <property type="project" value="UniProtKB-UniRule"/>
</dbReference>
<dbReference type="CDD" id="cd01887">
    <property type="entry name" value="IF2_eIF5B"/>
    <property type="match status" value="1"/>
</dbReference>
<dbReference type="CDD" id="cd03702">
    <property type="entry name" value="IF2_mtIF2_II"/>
    <property type="match status" value="1"/>
</dbReference>
<dbReference type="CDD" id="cd03692">
    <property type="entry name" value="mtIF2_IVc"/>
    <property type="match status" value="1"/>
</dbReference>
<dbReference type="FunFam" id="2.40.30.10:FF:000007">
    <property type="entry name" value="Translation initiation factor IF-2"/>
    <property type="match status" value="1"/>
</dbReference>
<dbReference type="FunFam" id="2.40.30.10:FF:000008">
    <property type="entry name" value="Translation initiation factor IF-2"/>
    <property type="match status" value="1"/>
</dbReference>
<dbReference type="FunFam" id="3.40.50.10050:FF:000001">
    <property type="entry name" value="Translation initiation factor IF-2"/>
    <property type="match status" value="1"/>
</dbReference>
<dbReference type="FunFam" id="3.40.50.300:FF:000019">
    <property type="entry name" value="Translation initiation factor IF-2"/>
    <property type="match status" value="1"/>
</dbReference>
<dbReference type="Gene3D" id="1.10.10.2480">
    <property type="match status" value="1"/>
</dbReference>
<dbReference type="Gene3D" id="3.40.50.300">
    <property type="entry name" value="P-loop containing nucleotide triphosphate hydrolases"/>
    <property type="match status" value="1"/>
</dbReference>
<dbReference type="Gene3D" id="2.40.30.10">
    <property type="entry name" value="Translation factors"/>
    <property type="match status" value="2"/>
</dbReference>
<dbReference type="Gene3D" id="3.40.50.10050">
    <property type="entry name" value="Translation initiation factor IF- 2, domain 3"/>
    <property type="match status" value="1"/>
</dbReference>
<dbReference type="HAMAP" id="MF_00100_B">
    <property type="entry name" value="IF_2_B"/>
    <property type="match status" value="1"/>
</dbReference>
<dbReference type="InterPro" id="IPR053905">
    <property type="entry name" value="EF-G-like_DII"/>
</dbReference>
<dbReference type="InterPro" id="IPR044145">
    <property type="entry name" value="IF2_II"/>
</dbReference>
<dbReference type="InterPro" id="IPR006847">
    <property type="entry name" value="IF2_N"/>
</dbReference>
<dbReference type="InterPro" id="IPR027417">
    <property type="entry name" value="P-loop_NTPase"/>
</dbReference>
<dbReference type="InterPro" id="IPR005225">
    <property type="entry name" value="Small_GTP-bd"/>
</dbReference>
<dbReference type="InterPro" id="IPR000795">
    <property type="entry name" value="T_Tr_GTP-bd_dom"/>
</dbReference>
<dbReference type="InterPro" id="IPR000178">
    <property type="entry name" value="TF_IF2_bacterial-like"/>
</dbReference>
<dbReference type="InterPro" id="IPR015760">
    <property type="entry name" value="TIF_IF2"/>
</dbReference>
<dbReference type="InterPro" id="IPR023115">
    <property type="entry name" value="TIF_IF2_dom3"/>
</dbReference>
<dbReference type="InterPro" id="IPR036925">
    <property type="entry name" value="TIF_IF2_dom3_sf"/>
</dbReference>
<dbReference type="InterPro" id="IPR009000">
    <property type="entry name" value="Transl_B-barrel_sf"/>
</dbReference>
<dbReference type="NCBIfam" id="TIGR00487">
    <property type="entry name" value="IF-2"/>
    <property type="match status" value="1"/>
</dbReference>
<dbReference type="NCBIfam" id="TIGR00231">
    <property type="entry name" value="small_GTP"/>
    <property type="match status" value="1"/>
</dbReference>
<dbReference type="PANTHER" id="PTHR43381:SF5">
    <property type="entry name" value="TR-TYPE G DOMAIN-CONTAINING PROTEIN"/>
    <property type="match status" value="1"/>
</dbReference>
<dbReference type="PANTHER" id="PTHR43381">
    <property type="entry name" value="TRANSLATION INITIATION FACTOR IF-2-RELATED"/>
    <property type="match status" value="1"/>
</dbReference>
<dbReference type="Pfam" id="PF22042">
    <property type="entry name" value="EF-G_D2"/>
    <property type="match status" value="1"/>
</dbReference>
<dbReference type="Pfam" id="PF00009">
    <property type="entry name" value="GTP_EFTU"/>
    <property type="match status" value="1"/>
</dbReference>
<dbReference type="Pfam" id="PF11987">
    <property type="entry name" value="IF-2"/>
    <property type="match status" value="1"/>
</dbReference>
<dbReference type="Pfam" id="PF04760">
    <property type="entry name" value="IF2_N"/>
    <property type="match status" value="2"/>
</dbReference>
<dbReference type="PRINTS" id="PR00449">
    <property type="entry name" value="RASTRNSFRMNG"/>
</dbReference>
<dbReference type="SUPFAM" id="SSF52156">
    <property type="entry name" value="Initiation factor IF2/eIF5b, domain 3"/>
    <property type="match status" value="1"/>
</dbReference>
<dbReference type="SUPFAM" id="SSF52540">
    <property type="entry name" value="P-loop containing nucleoside triphosphate hydrolases"/>
    <property type="match status" value="1"/>
</dbReference>
<dbReference type="SUPFAM" id="SSF50447">
    <property type="entry name" value="Translation proteins"/>
    <property type="match status" value="2"/>
</dbReference>
<dbReference type="PROSITE" id="PS51722">
    <property type="entry name" value="G_TR_2"/>
    <property type="match status" value="1"/>
</dbReference>
<dbReference type="PROSITE" id="PS01176">
    <property type="entry name" value="IF2"/>
    <property type="match status" value="1"/>
</dbReference>
<comment type="function">
    <text evidence="2">One of the essential components for the initiation of protein synthesis. Protects formylmethionyl-tRNA from spontaneous hydrolysis and promotes its binding to the 30S ribosomal subunits. Also involved in the hydrolysis of GTP during the formation of the 70S ribosomal complex.</text>
</comment>
<comment type="subcellular location">
    <subcellularLocation>
        <location evidence="2">Cytoplasm</location>
    </subcellularLocation>
</comment>
<comment type="similarity">
    <text evidence="2">Belongs to the TRAFAC class translation factor GTPase superfamily. Classic translation factor GTPase family. IF-2 subfamily.</text>
</comment>
<proteinExistence type="inferred from homology"/>